<feature type="signal peptide" evidence="7">
    <location>
        <begin position="1"/>
        <end position="21"/>
    </location>
</feature>
<feature type="chain" id="PRO_0000387526" description="LRR receptor-like serine/threonine-protein kinase RGI5">
    <location>
        <begin position="22"/>
        <end position="1072"/>
    </location>
</feature>
<feature type="topological domain" description="Extracellular" evidence="7">
    <location>
        <begin position="22"/>
        <end position="706"/>
    </location>
</feature>
<feature type="transmembrane region" description="Helical" evidence="7">
    <location>
        <begin position="707"/>
        <end position="727"/>
    </location>
</feature>
<feature type="topological domain" description="Cytoplasmic" evidence="7">
    <location>
        <begin position="728"/>
        <end position="1072"/>
    </location>
</feature>
<feature type="repeat" description="LRR 1" evidence="7">
    <location>
        <begin position="66"/>
        <end position="89"/>
    </location>
</feature>
<feature type="repeat" description="LRR 2" evidence="7">
    <location>
        <begin position="90"/>
        <end position="113"/>
    </location>
</feature>
<feature type="repeat" description="LRR 3" evidence="7">
    <location>
        <begin position="114"/>
        <end position="138"/>
    </location>
</feature>
<feature type="repeat" description="LRR 4" evidence="7">
    <location>
        <begin position="140"/>
        <end position="162"/>
    </location>
</feature>
<feature type="repeat" description="LRR 5" evidence="7">
    <location>
        <begin position="164"/>
        <end position="185"/>
    </location>
</feature>
<feature type="repeat" description="LRR 6" evidence="7">
    <location>
        <begin position="187"/>
        <end position="211"/>
    </location>
</feature>
<feature type="repeat" description="LRR 7" evidence="7">
    <location>
        <begin position="212"/>
        <end position="234"/>
    </location>
</feature>
<feature type="repeat" description="LRR 8" evidence="7">
    <location>
        <begin position="235"/>
        <end position="259"/>
    </location>
</feature>
<feature type="repeat" description="LRR 9" evidence="7">
    <location>
        <begin position="260"/>
        <end position="283"/>
    </location>
</feature>
<feature type="repeat" description="LRR 10" evidence="7">
    <location>
        <begin position="285"/>
        <end position="307"/>
    </location>
</feature>
<feature type="repeat" description="LRR 11" evidence="7">
    <location>
        <begin position="308"/>
        <end position="331"/>
    </location>
</feature>
<feature type="repeat" description="LRR 12" evidence="7">
    <location>
        <begin position="332"/>
        <end position="355"/>
    </location>
</feature>
<feature type="repeat" description="LRR 13" evidence="7">
    <location>
        <begin position="356"/>
        <end position="379"/>
    </location>
</feature>
<feature type="repeat" description="LRR 14" evidence="7">
    <location>
        <begin position="381"/>
        <end position="402"/>
    </location>
</feature>
<feature type="repeat" description="LRR 15" evidence="7">
    <location>
        <begin position="403"/>
        <end position="427"/>
    </location>
</feature>
<feature type="repeat" description="LRR 16" evidence="7">
    <location>
        <begin position="429"/>
        <end position="451"/>
    </location>
</feature>
<feature type="repeat" description="LRR 17" evidence="7">
    <location>
        <begin position="452"/>
        <end position="475"/>
    </location>
</feature>
<feature type="repeat" description="LRR 18" evidence="7">
    <location>
        <begin position="477"/>
        <end position="499"/>
    </location>
</feature>
<feature type="repeat" description="LRR 19" evidence="7">
    <location>
        <begin position="500"/>
        <end position="523"/>
    </location>
</feature>
<feature type="repeat" description="LRR 20" evidence="7">
    <location>
        <begin position="524"/>
        <end position="546"/>
    </location>
</feature>
<feature type="repeat" description="LRR 21" evidence="7">
    <location>
        <begin position="548"/>
        <end position="571"/>
    </location>
</feature>
<feature type="repeat" description="LRR 22" evidence="7">
    <location>
        <begin position="572"/>
        <end position="595"/>
    </location>
</feature>
<feature type="repeat" description="LRR 23" evidence="7">
    <location>
        <begin position="597"/>
        <end position="619"/>
    </location>
</feature>
<feature type="repeat" description="LRR 24" evidence="7">
    <location>
        <begin position="620"/>
        <end position="642"/>
    </location>
</feature>
<feature type="repeat" description="LRR 25" evidence="7">
    <location>
        <begin position="643"/>
        <end position="667"/>
    </location>
</feature>
<feature type="domain" description="Protein kinase" evidence="8">
    <location>
        <begin position="772"/>
        <end position="1067"/>
    </location>
</feature>
<feature type="short sequence motif" description="Small peptide recognition" evidence="1">
    <location>
        <begin position="171"/>
        <end position="172"/>
    </location>
</feature>
<feature type="short sequence motif" description="Small peptide recognition" evidence="1">
    <location>
        <begin position="193"/>
        <end position="196"/>
    </location>
</feature>
<feature type="short sequence motif" description="Small peptide recognition" evidence="1">
    <location>
        <begin position="216"/>
        <end position="221"/>
    </location>
</feature>
<feature type="short sequence motif" description="Small peptide recognition" evidence="1">
    <location>
        <position position="244"/>
    </location>
</feature>
<feature type="short sequence motif" description="Small peptide recognition" evidence="1">
    <location>
        <begin position="266"/>
        <end position="268"/>
    </location>
</feature>
<feature type="short sequence motif" description="Small peptide recognition" evidence="1">
    <location>
        <begin position="314"/>
        <end position="317"/>
    </location>
</feature>
<feature type="short sequence motif" description="Small peptide recognition" evidence="1">
    <location>
        <begin position="336"/>
        <end position="338"/>
    </location>
</feature>
<feature type="short sequence motif" description="Small peptide recognition" evidence="1">
    <location>
        <begin position="384"/>
        <end position="388"/>
    </location>
</feature>
<feature type="short sequence motif" description="Small peptide recognition" evidence="1">
    <location>
        <begin position="410"/>
        <end position="413"/>
    </location>
</feature>
<feature type="short sequence motif" description="Small peptide recognition" evidence="1">
    <location>
        <begin position="432"/>
        <end position="436"/>
    </location>
</feature>
<feature type="short sequence motif" description="Small peptide recognition" evidence="1">
    <location>
        <begin position="456"/>
        <end position="458"/>
    </location>
</feature>
<feature type="active site" description="Proton acceptor" evidence="8 10">
    <location>
        <position position="900"/>
    </location>
</feature>
<feature type="binding site" evidence="8">
    <location>
        <begin position="778"/>
        <end position="786"/>
    </location>
    <ligand>
        <name>ATP</name>
        <dbReference type="ChEBI" id="CHEBI:30616"/>
    </ligand>
</feature>
<feature type="binding site" evidence="8">
    <location>
        <position position="800"/>
    </location>
    <ligand>
        <name>ATP</name>
        <dbReference type="ChEBI" id="CHEBI:30616"/>
    </ligand>
</feature>
<feature type="site" description="Essential for autophosphorylation activity" evidence="5">
    <location>
        <position position="800"/>
    </location>
</feature>
<feature type="modified residue" description="Phosphothreonine" evidence="3">
    <location>
        <position position="764"/>
    </location>
</feature>
<feature type="modified residue" description="Phosphotyrosine" evidence="3">
    <location>
        <position position="851"/>
    </location>
</feature>
<feature type="modified residue" description="Phosphotyrosine" evidence="2">
    <location>
        <position position="887"/>
    </location>
</feature>
<feature type="modified residue" description="Phosphoserine" evidence="6">
    <location>
        <position position="936"/>
    </location>
</feature>
<feature type="modified residue" description="Phosphotyrosine" evidence="2">
    <location>
        <position position="944"/>
    </location>
</feature>
<feature type="modified residue" description="Phosphotyrosine" evidence="6">
    <location>
        <position position="951"/>
    </location>
</feature>
<feature type="modified residue" description="Phosphothreonine" evidence="6">
    <location>
        <position position="952"/>
    </location>
</feature>
<feature type="glycosylation site" description="N-linked (GlcNAc...) asparagine" evidence="9">
    <location>
        <position position="80"/>
    </location>
</feature>
<feature type="glycosylation site" description="N-linked (GlcNAc...) asparagine" evidence="9">
    <location>
        <position position="97"/>
    </location>
</feature>
<feature type="glycosylation site" description="N-linked (GlcNAc...) asparagine" evidence="9">
    <location>
        <position position="102"/>
    </location>
</feature>
<feature type="glycosylation site" description="N-linked (GlcNAc...) asparagine" evidence="9">
    <location>
        <position position="176"/>
    </location>
</feature>
<feature type="glycosylation site" description="N-linked (GlcNAc...) asparagine" evidence="9">
    <location>
        <position position="213"/>
    </location>
</feature>
<feature type="glycosylation site" description="N-linked (GlcNAc...) asparagine" evidence="9">
    <location>
        <position position="306"/>
    </location>
</feature>
<feature type="glycosylation site" description="N-linked (GlcNAc...) asparagine" evidence="9">
    <location>
        <position position="354"/>
    </location>
</feature>
<feature type="glycosylation site" description="N-linked (GlcNAc...) asparagine" evidence="9">
    <location>
        <position position="402"/>
    </location>
</feature>
<feature type="glycosylation site" description="N-linked (GlcNAc...) asparagine" evidence="9">
    <location>
        <position position="498"/>
    </location>
</feature>
<feature type="glycosylation site" description="N-linked (GlcNAc...) asparagine" evidence="9">
    <location>
        <position position="546"/>
    </location>
</feature>
<feature type="glycosylation site" description="N-linked (GlcNAc...) asparagine" evidence="9">
    <location>
        <position position="650"/>
    </location>
</feature>
<feature type="glycosylation site" description="N-linked (GlcNAc...) asparagine" evidence="9">
    <location>
        <position position="655"/>
    </location>
</feature>
<feature type="disulfide bond" evidence="4">
    <location>
        <begin position="56"/>
        <end position="63"/>
    </location>
</feature>
<organism>
    <name type="scientific">Arabidopsis thaliana</name>
    <name type="common">Mouse-ear cress</name>
    <dbReference type="NCBI Taxonomy" id="3702"/>
    <lineage>
        <taxon>Eukaryota</taxon>
        <taxon>Viridiplantae</taxon>
        <taxon>Streptophyta</taxon>
        <taxon>Embryophyta</taxon>
        <taxon>Tracheophyta</taxon>
        <taxon>Spermatophyta</taxon>
        <taxon>Magnoliopsida</taxon>
        <taxon>eudicotyledons</taxon>
        <taxon>Gunneridae</taxon>
        <taxon>Pentapetalae</taxon>
        <taxon>rosids</taxon>
        <taxon>malvids</taxon>
        <taxon>Brassicales</taxon>
        <taxon>Brassicaceae</taxon>
        <taxon>Camelineae</taxon>
        <taxon>Arabidopsis</taxon>
    </lineage>
</organism>
<proteinExistence type="evidence at protein level"/>
<comment type="function">
    <text evidence="11 12">Together with RGI1, RGI2, RGI3 and RGI4, acts as a receptor of RGF1, a peptide hormone that maintains the postembryonic root stem cell niche by regulating the expression levels and patterns of the transcription factor PLETHORA (PLT) (PubMed:27229311, PubMed:27229312). Links RGF1 signal with its downstream components (PubMed:27229311).</text>
</comment>
<comment type="catalytic activity">
    <reaction evidence="8">
        <text>L-seryl-[protein] + ATP = O-phospho-L-seryl-[protein] + ADP + H(+)</text>
        <dbReference type="Rhea" id="RHEA:17989"/>
        <dbReference type="Rhea" id="RHEA-COMP:9863"/>
        <dbReference type="Rhea" id="RHEA-COMP:11604"/>
        <dbReference type="ChEBI" id="CHEBI:15378"/>
        <dbReference type="ChEBI" id="CHEBI:29999"/>
        <dbReference type="ChEBI" id="CHEBI:30616"/>
        <dbReference type="ChEBI" id="CHEBI:83421"/>
        <dbReference type="ChEBI" id="CHEBI:456216"/>
        <dbReference type="EC" id="2.7.11.1"/>
    </reaction>
</comment>
<comment type="catalytic activity">
    <reaction evidence="8">
        <text>L-threonyl-[protein] + ATP = O-phospho-L-threonyl-[protein] + ADP + H(+)</text>
        <dbReference type="Rhea" id="RHEA:46608"/>
        <dbReference type="Rhea" id="RHEA-COMP:11060"/>
        <dbReference type="Rhea" id="RHEA-COMP:11605"/>
        <dbReference type="ChEBI" id="CHEBI:15378"/>
        <dbReference type="ChEBI" id="CHEBI:30013"/>
        <dbReference type="ChEBI" id="CHEBI:30616"/>
        <dbReference type="ChEBI" id="CHEBI:61977"/>
        <dbReference type="ChEBI" id="CHEBI:456216"/>
        <dbReference type="EC" id="2.7.11.1"/>
    </reaction>
</comment>
<comment type="subunit">
    <text evidence="11">Binds to RGF1; this interaction triggers the formation of heterodimers with SERK1.</text>
</comment>
<comment type="interaction">
    <interactant intactId="EBI-16964286">
        <id>C0LGF5</id>
    </interactant>
    <interactant intactId="EBI-16914444">
        <id>Q9LJY0</id>
        <label>PRK4</label>
    </interactant>
    <organismsDiffer>false</organismsDiffer>
    <experiments>2</experiments>
</comment>
<comment type="interaction">
    <interactant intactId="EBI-16964286">
        <id>C0LGF5</id>
    </interactant>
    <interactant intactId="EBI-1626936">
        <id>Q9LVI6</id>
        <label>RLK902</label>
    </interactant>
    <organismsDiffer>false</organismsDiffer>
    <experiments>2</experiments>
</comment>
<comment type="subcellular location">
    <subcellularLocation>
        <location evidence="7">Membrane</location>
        <topology evidence="7">Single-pass type I membrane protein</topology>
    </subcellularLocation>
</comment>
<comment type="tissue specificity">
    <text evidence="11">Expressed in roots and hypocotyls.</text>
</comment>
<comment type="developmental stage">
    <text evidence="11">Present in the whole roots.</text>
</comment>
<comment type="PTM">
    <text evidence="5">Phosphorylated and ubiquitinated upon interaction with RGF1, thus leading to activation a subsequent degradation.</text>
</comment>
<comment type="PTM">
    <text evidence="3">Autophosphorylated.</text>
</comment>
<comment type="disruption phenotype">
    <text evidence="11 12">Smaller root meristem size and fewer root meristematic cortex cells, associated with shorter roots and a slighty reduced sensitivity to RGF1 (PubMed:27229311). Quintuple mutants rgi1 rgi2 rgi3 rgi4 rgi5 display a consistent short primary root phenotype with a small size of meristem associated with a total insensitivity to RGF1 and undetectable levels of PLT1 and PLT2 (PubMed:27229312).</text>
</comment>
<comment type="similarity">
    <text evidence="8">Belongs to the protein kinase superfamily. Ser/Thr protein kinase family.</text>
</comment>
<comment type="sequence caution" evidence="15">
    <conflict type="erroneous gene model prediction">
        <sequence resource="EMBL-CDS" id="AAG12526"/>
    </conflict>
</comment>
<sequence length="1072" mass="116725">MERERSNFFFLFLFCSWVSMAQPTLSLSSDGQALLSLKRPSPSLFSSWDPQDQTPCSWYGITCSADNRVISVSIPDTFLNLSSIPDLSSLSSLQFLNLSSTNLSGPIPPSFGKLTHLRLLDLSSNSLSGPIPSELGRLSTLQFLILNANKLSGSIPSQISNLFALQVLCLQDNLLNGSIPSSFGSLVSLQQFRLGGNTNLGGPIPAQLGFLKNLTTLGFAASGLSGSIPSTFGNLVNLQTLALYDTEISGTIPPQLGLCSELRNLYLHMNKLTGSIPKELGKLQKITSLLLWGNSLSGVIPPEISNCSSLVVFDVSANDLTGDIPGDLGKLVWLEQLQLSDNMFTGQIPWELSNCSSLIALQLDKNKLSGSIPSQIGNLKSLQSFFLWENSISGTIPSSFGNCTDLVALDLSRNKLTGRIPEELFSLKRLSKLLLLGNSLSGGLPKSVAKCQSLVRLRVGENQLSGQIPKEIGELQNLVFLDLYMNHFSGGLPYEISNITVLELLDVHNNYITGDIPAQLGNLVNLEQLDLSRNSFTGNIPLSFGNLSYLNKLILNNNLLTGQIPKSIKNLQKLTLLDLSYNSLSGEIPQELGQVTSLTINLDLSYNTFTGNIPETFSDLTQLQSLDLSSNSLHGDIKVLGSLTSLASLNISCNNFSGPIPSTPFFKTISTTSYLQNTNLCHSLDGITCSSHTGQNNGVKSPKIVALTAVILASITIAILAAWLLILRNNHLYKTSQNSSSSPSTAEDFSYPWTFIPFQKLGITVNNIVTSLTDENVIGKGCSGIVYKAEIPNGDIVAVKKLWKTKDNNEEGESTIDSFAAEIQILGNIRHRNIVKLLGYCSNKSVKLLLYNYFPNGNLQQLLQGNRNLDWETRYKIAIGAAQGLAYLHHDCVPAILHRDVKCNNILLDSKYEAILADFGLAKLMMNSPNYHNAMSRVAGSYGYIAPEYGYTMNITEKSDVYSYGVVLLEILSGRSAVEPQIGDGLHIVEWVKKKMGTFEPALSVLDVKLQGLPDQIVQEMLQTLGIAMFCVNPSPVERPTMKEVVTLLMEVKCSPEEWGKTSQPLIKPSSS</sequence>
<keyword id="KW-0067">ATP-binding</keyword>
<keyword id="KW-1015">Disulfide bond</keyword>
<keyword id="KW-0325">Glycoprotein</keyword>
<keyword id="KW-0418">Kinase</keyword>
<keyword id="KW-0433">Leucine-rich repeat</keyword>
<keyword id="KW-0472">Membrane</keyword>
<keyword id="KW-0547">Nucleotide-binding</keyword>
<keyword id="KW-0597">Phosphoprotein</keyword>
<keyword id="KW-0675">Receptor</keyword>
<keyword id="KW-1185">Reference proteome</keyword>
<keyword id="KW-0677">Repeat</keyword>
<keyword id="KW-0723">Serine/threonine-protein kinase</keyword>
<keyword id="KW-0732">Signal</keyword>
<keyword id="KW-0808">Transferase</keyword>
<keyword id="KW-0812">Transmembrane</keyword>
<keyword id="KW-1133">Transmembrane helix</keyword>
<keyword id="KW-0832">Ubl conjugation</keyword>
<protein>
    <recommendedName>
        <fullName>LRR receptor-like serine/threonine-protein kinase RGI5</fullName>
        <ecNumber evidence="8">2.7.11.1</ecNumber>
    </recommendedName>
    <alternativeName>
        <fullName evidence="13">Protein RECEPTOR OF RGF1 5</fullName>
    </alternativeName>
    <alternativeName>
        <fullName evidence="14">Protein RGF1 INSENSITIVE 5</fullName>
    </alternativeName>
</protein>
<evidence type="ECO:0000250" key="1">
    <source>
        <dbReference type="UniProtKB" id="C0LGR3"/>
    </source>
</evidence>
<evidence type="ECO:0000250" key="2">
    <source>
        <dbReference type="UniProtKB" id="C0LGT6"/>
    </source>
</evidence>
<evidence type="ECO:0000250" key="3">
    <source>
        <dbReference type="UniProtKB" id="O22476"/>
    </source>
</evidence>
<evidence type="ECO:0000250" key="4">
    <source>
        <dbReference type="UniProtKB" id="Q94AG2"/>
    </source>
</evidence>
<evidence type="ECO:0000250" key="5">
    <source>
        <dbReference type="UniProtKB" id="Q9LHP4"/>
    </source>
</evidence>
<evidence type="ECO:0000250" key="6">
    <source>
        <dbReference type="UniProtKB" id="Q9M0G7"/>
    </source>
</evidence>
<evidence type="ECO:0000255" key="7"/>
<evidence type="ECO:0000255" key="8">
    <source>
        <dbReference type="PROSITE-ProRule" id="PRU00159"/>
    </source>
</evidence>
<evidence type="ECO:0000255" key="9">
    <source>
        <dbReference type="PROSITE-ProRule" id="PRU00498"/>
    </source>
</evidence>
<evidence type="ECO:0000255" key="10">
    <source>
        <dbReference type="PROSITE-ProRule" id="PRU10027"/>
    </source>
</evidence>
<evidence type="ECO:0000269" key="11">
    <source>
    </source>
</evidence>
<evidence type="ECO:0000269" key="12">
    <source>
    </source>
</evidence>
<evidence type="ECO:0000303" key="13">
    <source>
    </source>
</evidence>
<evidence type="ECO:0000303" key="14">
    <source>
    </source>
</evidence>
<evidence type="ECO:0000305" key="15"/>
<evidence type="ECO:0000312" key="16">
    <source>
        <dbReference type="Araport" id="AT1G34110"/>
    </source>
</evidence>
<evidence type="ECO:0000312" key="17">
    <source>
        <dbReference type="EMBL" id="AAG12526.1"/>
    </source>
</evidence>
<accession>C0LGF5</accession>
<accession>Q9FX19</accession>
<reference key="1">
    <citation type="journal article" date="2000" name="Nature">
        <title>Sequence and analysis of chromosome 1 of the plant Arabidopsis thaliana.</title>
        <authorList>
            <person name="Theologis A."/>
            <person name="Ecker J.R."/>
            <person name="Palm C.J."/>
            <person name="Federspiel N.A."/>
            <person name="Kaul S."/>
            <person name="White O."/>
            <person name="Alonso J."/>
            <person name="Altafi H."/>
            <person name="Araujo R."/>
            <person name="Bowman C.L."/>
            <person name="Brooks S.Y."/>
            <person name="Buehler E."/>
            <person name="Chan A."/>
            <person name="Chao Q."/>
            <person name="Chen H."/>
            <person name="Cheuk R.F."/>
            <person name="Chin C.W."/>
            <person name="Chung M.K."/>
            <person name="Conn L."/>
            <person name="Conway A.B."/>
            <person name="Conway A.R."/>
            <person name="Creasy T.H."/>
            <person name="Dewar K."/>
            <person name="Dunn P."/>
            <person name="Etgu P."/>
            <person name="Feldblyum T.V."/>
            <person name="Feng J.-D."/>
            <person name="Fong B."/>
            <person name="Fujii C.Y."/>
            <person name="Gill J.E."/>
            <person name="Goldsmith A.D."/>
            <person name="Haas B."/>
            <person name="Hansen N.F."/>
            <person name="Hughes B."/>
            <person name="Huizar L."/>
            <person name="Hunter J.L."/>
            <person name="Jenkins J."/>
            <person name="Johnson-Hopson C."/>
            <person name="Khan S."/>
            <person name="Khaykin E."/>
            <person name="Kim C.J."/>
            <person name="Koo H.L."/>
            <person name="Kremenetskaia I."/>
            <person name="Kurtz D.B."/>
            <person name="Kwan A."/>
            <person name="Lam B."/>
            <person name="Langin-Hooper S."/>
            <person name="Lee A."/>
            <person name="Lee J.M."/>
            <person name="Lenz C.A."/>
            <person name="Li J.H."/>
            <person name="Li Y.-P."/>
            <person name="Lin X."/>
            <person name="Liu S.X."/>
            <person name="Liu Z.A."/>
            <person name="Luros J.S."/>
            <person name="Maiti R."/>
            <person name="Marziali A."/>
            <person name="Militscher J."/>
            <person name="Miranda M."/>
            <person name="Nguyen M."/>
            <person name="Nierman W.C."/>
            <person name="Osborne B.I."/>
            <person name="Pai G."/>
            <person name="Peterson J."/>
            <person name="Pham P.K."/>
            <person name="Rizzo M."/>
            <person name="Rooney T."/>
            <person name="Rowley D."/>
            <person name="Sakano H."/>
            <person name="Salzberg S.L."/>
            <person name="Schwartz J.R."/>
            <person name="Shinn P."/>
            <person name="Southwick A.M."/>
            <person name="Sun H."/>
            <person name="Tallon L.J."/>
            <person name="Tambunga G."/>
            <person name="Toriumi M.J."/>
            <person name="Town C.D."/>
            <person name="Utterback T."/>
            <person name="Van Aken S."/>
            <person name="Vaysberg M."/>
            <person name="Vysotskaia V.S."/>
            <person name="Walker M."/>
            <person name="Wu D."/>
            <person name="Yu G."/>
            <person name="Fraser C.M."/>
            <person name="Venter J.C."/>
            <person name="Davis R.W."/>
        </authorList>
    </citation>
    <scope>NUCLEOTIDE SEQUENCE [LARGE SCALE GENOMIC DNA]</scope>
    <source>
        <strain>cv. Columbia</strain>
    </source>
</reference>
<reference key="2">
    <citation type="journal article" date="2017" name="Plant J.">
        <title>Araport11: a complete reannotation of the Arabidopsis thaliana reference genome.</title>
        <authorList>
            <person name="Cheng C.Y."/>
            <person name="Krishnakumar V."/>
            <person name="Chan A.P."/>
            <person name="Thibaud-Nissen F."/>
            <person name="Schobel S."/>
            <person name="Town C.D."/>
        </authorList>
    </citation>
    <scope>GENOME REANNOTATION</scope>
    <source>
        <strain>cv. Columbia</strain>
    </source>
</reference>
<reference key="3">
    <citation type="journal article" date="2010" name="BMC Genomics">
        <title>Genome-wide cloning and sequence analysis of leucine-rich repeat receptor-like protein kinase genes in Arabidopsis thaliana.</title>
        <authorList>
            <person name="Gou X."/>
            <person name="He K."/>
            <person name="Yang H."/>
            <person name="Yuan T."/>
            <person name="Lin H."/>
            <person name="Clouse S.D."/>
            <person name="Li J."/>
        </authorList>
    </citation>
    <scope>NUCLEOTIDE SEQUENCE [LARGE SCALE MRNA] OF 20-1072</scope>
    <source>
        <strain>cv. Columbia</strain>
    </source>
</reference>
<reference key="4">
    <citation type="journal article" date="2016" name="Cell Res.">
        <title>Signature motif-guided identification of receptors for peptide hormones essential for root meristem growth.</title>
        <authorList>
            <person name="Song W."/>
            <person name="Liu L."/>
            <person name="Wang J."/>
            <person name="Wu Z."/>
            <person name="Zhang H."/>
            <person name="Tang J."/>
            <person name="Lin G."/>
            <person name="Wang Y."/>
            <person name="Wen X."/>
            <person name="Li W."/>
            <person name="Han Z."/>
            <person name="Guo H."/>
            <person name="Chai J."/>
        </authorList>
    </citation>
    <scope>FUNCTION</scope>
    <scope>DISRUPTION PHENOTYPE</scope>
    <scope>TISSUE SPECIFICITY</scope>
    <scope>DEVELOPMENTAL STAGE</scope>
    <scope>INTERACTION WITH RGF1</scope>
    <scope>GENE FAMILY</scope>
    <scope>NOMENCLATURE</scope>
    <source>
        <strain>cv. Columbia</strain>
    </source>
</reference>
<reference key="5">
    <citation type="journal article" date="2016" name="Cell Res.">
        <title>RGF1 INSENSITIVE 1 to 5, a group of LRR receptor-like kinases, are essential for the perception of root meristem growth factor 1 in Arabidopsis thaliana.</title>
        <authorList>
            <person name="Ou Y."/>
            <person name="Lu X."/>
            <person name="Zi Q."/>
            <person name="Xun Q."/>
            <person name="Zhang J."/>
            <person name="Wu Y."/>
            <person name="Shi H."/>
            <person name="Wei Z."/>
            <person name="Zhao B."/>
            <person name="Zhang X."/>
            <person name="He K."/>
            <person name="Gou X."/>
            <person name="Li C."/>
            <person name="Li J."/>
        </authorList>
    </citation>
    <scope>FUNCTION</scope>
    <scope>DISRUPTION PHENOTYPE</scope>
    <source>
        <strain>cv. Columbia</strain>
    </source>
</reference>
<dbReference type="EC" id="2.7.11.1" evidence="8"/>
<dbReference type="EMBL" id="AC015446">
    <property type="protein sequence ID" value="AAG12526.1"/>
    <property type="status" value="ALT_SEQ"/>
    <property type="molecule type" value="Genomic_DNA"/>
</dbReference>
<dbReference type="EMBL" id="CP002684">
    <property type="protein sequence ID" value="AEE31671.1"/>
    <property type="molecule type" value="Genomic_DNA"/>
</dbReference>
<dbReference type="EMBL" id="FJ708644">
    <property type="protein sequence ID" value="ACN59240.1"/>
    <property type="molecule type" value="mRNA"/>
</dbReference>
<dbReference type="PIR" id="B86465">
    <property type="entry name" value="B86465"/>
</dbReference>
<dbReference type="RefSeq" id="NP_174673.3">
    <property type="nucleotide sequence ID" value="NM_103134.4"/>
</dbReference>
<dbReference type="SMR" id="C0LGF5"/>
<dbReference type="BioGRID" id="25542">
    <property type="interactions" value="27"/>
</dbReference>
<dbReference type="FunCoup" id="C0LGF5">
    <property type="interactions" value="1238"/>
</dbReference>
<dbReference type="IntAct" id="C0LGF5">
    <property type="interactions" value="29"/>
</dbReference>
<dbReference type="STRING" id="3702.C0LGF5"/>
<dbReference type="GlyCosmos" id="C0LGF5">
    <property type="glycosylation" value="12 sites, No reported glycans"/>
</dbReference>
<dbReference type="GlyGen" id="C0LGF5">
    <property type="glycosylation" value="12 sites"/>
</dbReference>
<dbReference type="iPTMnet" id="C0LGF5"/>
<dbReference type="PaxDb" id="3702-AT1G34110.1"/>
<dbReference type="ProteomicsDB" id="242430"/>
<dbReference type="EnsemblPlants" id="AT1G34110.1">
    <property type="protein sequence ID" value="AT1G34110.1"/>
    <property type="gene ID" value="AT1G34110"/>
</dbReference>
<dbReference type="GeneID" id="840310"/>
<dbReference type="Gramene" id="AT1G34110.1">
    <property type="protein sequence ID" value="AT1G34110.1"/>
    <property type="gene ID" value="AT1G34110"/>
</dbReference>
<dbReference type="KEGG" id="ath:AT1G34110"/>
<dbReference type="Araport" id="AT1G34110"/>
<dbReference type="TAIR" id="AT1G34110">
    <property type="gene designation" value="RGI5"/>
</dbReference>
<dbReference type="eggNOG" id="ENOG502QSRW">
    <property type="taxonomic scope" value="Eukaryota"/>
</dbReference>
<dbReference type="HOGENOM" id="CLU_000288_22_1_1"/>
<dbReference type="InParanoid" id="C0LGF5"/>
<dbReference type="PhylomeDB" id="C0LGF5"/>
<dbReference type="PRO" id="PR:C0LGF5"/>
<dbReference type="Proteomes" id="UP000006548">
    <property type="component" value="Chromosome 1"/>
</dbReference>
<dbReference type="ExpressionAtlas" id="C0LGF5">
    <property type="expression patterns" value="baseline and differential"/>
</dbReference>
<dbReference type="GO" id="GO:0016020">
    <property type="term" value="C:membrane"/>
    <property type="evidence" value="ECO:0007669"/>
    <property type="project" value="UniProtKB-SubCell"/>
</dbReference>
<dbReference type="GO" id="GO:0005524">
    <property type="term" value="F:ATP binding"/>
    <property type="evidence" value="ECO:0007669"/>
    <property type="project" value="UniProtKB-KW"/>
</dbReference>
<dbReference type="GO" id="GO:0001653">
    <property type="term" value="F:peptide receptor activity"/>
    <property type="evidence" value="ECO:0000315"/>
    <property type="project" value="UniProtKB"/>
</dbReference>
<dbReference type="GO" id="GO:0106310">
    <property type="term" value="F:protein serine kinase activity"/>
    <property type="evidence" value="ECO:0007669"/>
    <property type="project" value="RHEA"/>
</dbReference>
<dbReference type="GO" id="GO:0004674">
    <property type="term" value="F:protein serine/threonine kinase activity"/>
    <property type="evidence" value="ECO:0007669"/>
    <property type="project" value="UniProtKB-KW"/>
</dbReference>
<dbReference type="GO" id="GO:0010074">
    <property type="term" value="P:maintenance of meristem identity"/>
    <property type="evidence" value="ECO:0000315"/>
    <property type="project" value="UniProtKB"/>
</dbReference>
<dbReference type="GO" id="GO:0010082">
    <property type="term" value="P:regulation of root meristem growth"/>
    <property type="evidence" value="ECO:0000316"/>
    <property type="project" value="TAIR"/>
</dbReference>
<dbReference type="FunFam" id="3.80.10.10:FF:000095">
    <property type="entry name" value="LRR receptor-like serine/threonine-protein kinase GSO1"/>
    <property type="match status" value="1"/>
</dbReference>
<dbReference type="FunFam" id="1.10.510.10:FF:000276">
    <property type="entry name" value="LRR receptor-like serine/threonine-protein kinase RCH1"/>
    <property type="match status" value="1"/>
</dbReference>
<dbReference type="FunFam" id="3.80.10.10:FF:000393">
    <property type="entry name" value="LRR receptor-like serine/threonine-protein kinase RCH1"/>
    <property type="match status" value="1"/>
</dbReference>
<dbReference type="FunFam" id="3.80.10.10:FF:000457">
    <property type="entry name" value="Probable LRR receptor-like serine/threonine-protein kinase At1g34110"/>
    <property type="match status" value="1"/>
</dbReference>
<dbReference type="FunFam" id="3.30.200.20:FF:000642">
    <property type="entry name" value="Putative LRR receptor-like serine/threonine-protein kinase"/>
    <property type="match status" value="1"/>
</dbReference>
<dbReference type="Gene3D" id="3.30.200.20">
    <property type="entry name" value="Phosphorylase Kinase, domain 1"/>
    <property type="match status" value="1"/>
</dbReference>
<dbReference type="Gene3D" id="3.80.10.10">
    <property type="entry name" value="Ribonuclease Inhibitor"/>
    <property type="match status" value="6"/>
</dbReference>
<dbReference type="Gene3D" id="1.10.510.10">
    <property type="entry name" value="Transferase(Phosphotransferase) domain 1"/>
    <property type="match status" value="1"/>
</dbReference>
<dbReference type="InterPro" id="IPR011009">
    <property type="entry name" value="Kinase-like_dom_sf"/>
</dbReference>
<dbReference type="InterPro" id="IPR001611">
    <property type="entry name" value="Leu-rich_rpt"/>
</dbReference>
<dbReference type="InterPro" id="IPR003591">
    <property type="entry name" value="Leu-rich_rpt_typical-subtyp"/>
</dbReference>
<dbReference type="InterPro" id="IPR032675">
    <property type="entry name" value="LRR_dom_sf"/>
</dbReference>
<dbReference type="InterPro" id="IPR013210">
    <property type="entry name" value="LRR_N_plant-typ"/>
</dbReference>
<dbReference type="InterPro" id="IPR055414">
    <property type="entry name" value="LRR_R13L4/SHOC2-like"/>
</dbReference>
<dbReference type="InterPro" id="IPR051809">
    <property type="entry name" value="Plant_receptor-like_S/T_kinase"/>
</dbReference>
<dbReference type="InterPro" id="IPR000719">
    <property type="entry name" value="Prot_kinase_dom"/>
</dbReference>
<dbReference type="InterPro" id="IPR017441">
    <property type="entry name" value="Protein_kinase_ATP_BS"/>
</dbReference>
<dbReference type="InterPro" id="IPR008271">
    <property type="entry name" value="Ser/Thr_kinase_AS"/>
</dbReference>
<dbReference type="PANTHER" id="PTHR27008:SF42">
    <property type="entry name" value="LEUCINE-RICH REPEAT PROTEIN KINASE FAMILY PROTEIN"/>
    <property type="match status" value="1"/>
</dbReference>
<dbReference type="PANTHER" id="PTHR27008">
    <property type="entry name" value="OS04G0122200 PROTEIN"/>
    <property type="match status" value="1"/>
</dbReference>
<dbReference type="Pfam" id="PF00560">
    <property type="entry name" value="LRR_1"/>
    <property type="match status" value="5"/>
</dbReference>
<dbReference type="Pfam" id="PF23598">
    <property type="entry name" value="LRR_14"/>
    <property type="match status" value="2"/>
</dbReference>
<dbReference type="Pfam" id="PF13855">
    <property type="entry name" value="LRR_8"/>
    <property type="match status" value="1"/>
</dbReference>
<dbReference type="Pfam" id="PF08263">
    <property type="entry name" value="LRRNT_2"/>
    <property type="match status" value="1"/>
</dbReference>
<dbReference type="Pfam" id="PF00069">
    <property type="entry name" value="Pkinase"/>
    <property type="match status" value="1"/>
</dbReference>
<dbReference type="PRINTS" id="PR00019">
    <property type="entry name" value="LEURICHRPT"/>
</dbReference>
<dbReference type="SMART" id="SM00369">
    <property type="entry name" value="LRR_TYP"/>
    <property type="match status" value="10"/>
</dbReference>
<dbReference type="SMART" id="SM00220">
    <property type="entry name" value="S_TKc"/>
    <property type="match status" value="1"/>
</dbReference>
<dbReference type="SUPFAM" id="SSF52058">
    <property type="entry name" value="L domain-like"/>
    <property type="match status" value="2"/>
</dbReference>
<dbReference type="SUPFAM" id="SSF56112">
    <property type="entry name" value="Protein kinase-like (PK-like)"/>
    <property type="match status" value="1"/>
</dbReference>
<dbReference type="PROSITE" id="PS51450">
    <property type="entry name" value="LRR"/>
    <property type="match status" value="16"/>
</dbReference>
<dbReference type="PROSITE" id="PS00107">
    <property type="entry name" value="PROTEIN_KINASE_ATP"/>
    <property type="match status" value="1"/>
</dbReference>
<dbReference type="PROSITE" id="PS50011">
    <property type="entry name" value="PROTEIN_KINASE_DOM"/>
    <property type="match status" value="1"/>
</dbReference>
<dbReference type="PROSITE" id="PS00108">
    <property type="entry name" value="PROTEIN_KINASE_ST"/>
    <property type="match status" value="1"/>
</dbReference>
<gene>
    <name evidence="14" type="primary">RGI5</name>
    <name evidence="13" type="synonym">RGFR5</name>
    <name evidence="16" type="ordered locus">At1g34110</name>
    <name evidence="17" type="ORF">F12G12.7</name>
</gene>
<name>RGI5_ARATH</name>